<evidence type="ECO:0000255" key="1"/>
<evidence type="ECO:0000255" key="2">
    <source>
        <dbReference type="PROSITE-ProRule" id="PRU00325"/>
    </source>
</evidence>
<evidence type="ECO:0000256" key="3">
    <source>
        <dbReference type="SAM" id="MobiDB-lite"/>
    </source>
</evidence>
<evidence type="ECO:0000269" key="4">
    <source>
    </source>
</evidence>
<evidence type="ECO:0000303" key="5">
    <source ref="3"/>
</evidence>
<evidence type="ECO:0000305" key="6"/>
<keyword id="KW-0025">Alternative splicing</keyword>
<keyword id="KW-0175">Coiled coil</keyword>
<keyword id="KW-0479">Metal-binding</keyword>
<keyword id="KW-0539">Nucleus</keyword>
<keyword id="KW-1185">Reference proteome</keyword>
<keyword id="KW-0862">Zinc</keyword>
<keyword id="KW-0863">Zinc-finger</keyword>
<organism>
    <name type="scientific">Arabidopsis thaliana</name>
    <name type="common">Mouse-ear cress</name>
    <dbReference type="NCBI Taxonomy" id="3702"/>
    <lineage>
        <taxon>Eukaryota</taxon>
        <taxon>Viridiplantae</taxon>
        <taxon>Streptophyta</taxon>
        <taxon>Embryophyta</taxon>
        <taxon>Tracheophyta</taxon>
        <taxon>Spermatophyta</taxon>
        <taxon>Magnoliopsida</taxon>
        <taxon>eudicotyledons</taxon>
        <taxon>Gunneridae</taxon>
        <taxon>Pentapetalae</taxon>
        <taxon>rosids</taxon>
        <taxon>malvids</taxon>
        <taxon>Brassicales</taxon>
        <taxon>Brassicaceae</taxon>
        <taxon>Camelineae</taxon>
        <taxon>Arabidopsis</taxon>
    </lineage>
</organism>
<proteinExistence type="evidence at protein level"/>
<protein>
    <recommendedName>
        <fullName>Protein FAR1-RELATED SEQUENCE 2</fullName>
    </recommendedName>
</protein>
<feature type="chain" id="PRO_0000363480" description="Protein FAR1-RELATED SEQUENCE 2">
    <location>
        <begin position="1"/>
        <end position="807"/>
    </location>
</feature>
<feature type="domain" description="FAR1">
    <location>
        <begin position="52"/>
        <end position="138"/>
    </location>
</feature>
<feature type="domain" description="MULE">
    <location>
        <begin position="219"/>
        <end position="315"/>
    </location>
</feature>
<feature type="zinc finger region" description="SWIM-type" evidence="2">
    <location>
        <begin position="499"/>
        <end position="535"/>
    </location>
</feature>
<feature type="region of interest" description="Disordered" evidence="3">
    <location>
        <begin position="788"/>
        <end position="807"/>
    </location>
</feature>
<feature type="coiled-coil region" evidence="1">
    <location>
        <begin position="660"/>
        <end position="680"/>
    </location>
</feature>
<feature type="compositionally biased region" description="Polar residues" evidence="3">
    <location>
        <begin position="788"/>
        <end position="798"/>
    </location>
</feature>
<feature type="splice variant" id="VSP_036307" description="In isoform 2." evidence="5">
    <location>
        <begin position="761"/>
        <end position="762"/>
    </location>
</feature>
<dbReference type="EMBL" id="AC005700">
    <property type="protein sequence ID" value="AAC69951.1"/>
    <property type="status" value="ALT_SEQ"/>
    <property type="molecule type" value="Genomic_DNA"/>
</dbReference>
<dbReference type="EMBL" id="CP002685">
    <property type="protein sequence ID" value="AEC08655.1"/>
    <property type="molecule type" value="Genomic_DNA"/>
</dbReference>
<dbReference type="EMBL" id="CP002685">
    <property type="protein sequence ID" value="AEC08656.1"/>
    <property type="molecule type" value="Genomic_DNA"/>
</dbReference>
<dbReference type="EMBL" id="CP002685">
    <property type="protein sequence ID" value="AEC08657.1"/>
    <property type="molecule type" value="Genomic_DNA"/>
</dbReference>
<dbReference type="EMBL" id="CP002685">
    <property type="protein sequence ID" value="AEC08658.1"/>
    <property type="molecule type" value="Genomic_DNA"/>
</dbReference>
<dbReference type="EMBL" id="CP002685">
    <property type="protein sequence ID" value="ANM62405.1"/>
    <property type="molecule type" value="Genomic_DNA"/>
</dbReference>
<dbReference type="EMBL" id="AK228730">
    <property type="protein sequence ID" value="BAF00632.1"/>
    <property type="molecule type" value="mRNA"/>
</dbReference>
<dbReference type="EMBL" id="AK221503">
    <property type="protein sequence ID" value="BAD94730.1"/>
    <property type="molecule type" value="mRNA"/>
</dbReference>
<dbReference type="PIR" id="G84730">
    <property type="entry name" value="G84730"/>
</dbReference>
<dbReference type="RefSeq" id="NP_001077991.1">
    <molecule id="Q3EBQ3-1"/>
    <property type="nucleotide sequence ID" value="NM_001084522.2"/>
</dbReference>
<dbReference type="RefSeq" id="NP_001118431.1">
    <molecule id="Q3EBQ3-2"/>
    <property type="nucleotide sequence ID" value="NM_001124959.2"/>
</dbReference>
<dbReference type="RefSeq" id="NP_001324564.1">
    <molecule id="Q3EBQ3-1"/>
    <property type="nucleotide sequence ID" value="NM_001336380.1"/>
</dbReference>
<dbReference type="RefSeq" id="NP_180784.2">
    <molecule id="Q3EBQ3-1"/>
    <property type="nucleotide sequence ID" value="NM_128784.4"/>
</dbReference>
<dbReference type="RefSeq" id="NP_973580.1">
    <molecule id="Q3EBQ3-2"/>
    <property type="nucleotide sequence ID" value="NM_201851.2"/>
</dbReference>
<dbReference type="BioGRID" id="3132">
    <property type="interactions" value="2"/>
</dbReference>
<dbReference type="FunCoup" id="Q3EBQ3">
    <property type="interactions" value="107"/>
</dbReference>
<dbReference type="IntAct" id="Q3EBQ3">
    <property type="interactions" value="2"/>
</dbReference>
<dbReference type="STRING" id="3702.Q3EBQ3"/>
<dbReference type="PaxDb" id="3702-AT2G32250.1"/>
<dbReference type="ProteomicsDB" id="230550">
    <molecule id="Q3EBQ3-1"/>
</dbReference>
<dbReference type="EnsemblPlants" id="AT2G32250.1">
    <molecule id="Q3EBQ3-1"/>
    <property type="protein sequence ID" value="AT2G32250.1"/>
    <property type="gene ID" value="AT2G32250"/>
</dbReference>
<dbReference type="EnsemblPlants" id="AT2G32250.2">
    <molecule id="Q3EBQ3-2"/>
    <property type="protein sequence ID" value="AT2G32250.2"/>
    <property type="gene ID" value="AT2G32250"/>
</dbReference>
<dbReference type="EnsemblPlants" id="AT2G32250.3">
    <molecule id="Q3EBQ3-1"/>
    <property type="protein sequence ID" value="AT2G32250.3"/>
    <property type="gene ID" value="AT2G32250"/>
</dbReference>
<dbReference type="EnsemblPlants" id="AT2G32250.4">
    <molecule id="Q3EBQ3-2"/>
    <property type="protein sequence ID" value="AT2G32250.4"/>
    <property type="gene ID" value="AT2G32250"/>
</dbReference>
<dbReference type="EnsemblPlants" id="AT2G32250.6">
    <molecule id="Q3EBQ3-1"/>
    <property type="protein sequence ID" value="AT2G32250.6"/>
    <property type="gene ID" value="AT2G32250"/>
</dbReference>
<dbReference type="GeneID" id="817785"/>
<dbReference type="Gramene" id="AT2G32250.1">
    <molecule id="Q3EBQ3-1"/>
    <property type="protein sequence ID" value="AT2G32250.1"/>
    <property type="gene ID" value="AT2G32250"/>
</dbReference>
<dbReference type="Gramene" id="AT2G32250.2">
    <molecule id="Q3EBQ3-2"/>
    <property type="protein sequence ID" value="AT2G32250.2"/>
    <property type="gene ID" value="AT2G32250"/>
</dbReference>
<dbReference type="Gramene" id="AT2G32250.3">
    <molecule id="Q3EBQ3-1"/>
    <property type="protein sequence ID" value="AT2G32250.3"/>
    <property type="gene ID" value="AT2G32250"/>
</dbReference>
<dbReference type="Gramene" id="AT2G32250.4">
    <molecule id="Q3EBQ3-2"/>
    <property type="protein sequence ID" value="AT2G32250.4"/>
    <property type="gene ID" value="AT2G32250"/>
</dbReference>
<dbReference type="Gramene" id="AT2G32250.6">
    <molecule id="Q3EBQ3-1"/>
    <property type="protein sequence ID" value="AT2G32250.6"/>
    <property type="gene ID" value="AT2G32250"/>
</dbReference>
<dbReference type="KEGG" id="ath:AT2G32250"/>
<dbReference type="Araport" id="AT2G32250"/>
<dbReference type="TAIR" id="AT2G32250">
    <property type="gene designation" value="FRS2"/>
</dbReference>
<dbReference type="eggNOG" id="ENOG502QSAM">
    <property type="taxonomic scope" value="Eukaryota"/>
</dbReference>
<dbReference type="HOGENOM" id="CLU_008459_7_1_1"/>
<dbReference type="InParanoid" id="Q3EBQ3"/>
<dbReference type="PhylomeDB" id="Q3EBQ3"/>
<dbReference type="PRO" id="PR:Q3EBQ3"/>
<dbReference type="Proteomes" id="UP000006548">
    <property type="component" value="Chromosome 2"/>
</dbReference>
<dbReference type="ExpressionAtlas" id="Q3EBQ3">
    <property type="expression patterns" value="baseline and differential"/>
</dbReference>
<dbReference type="GO" id="GO:0005634">
    <property type="term" value="C:nucleus"/>
    <property type="evidence" value="ECO:0007669"/>
    <property type="project" value="UniProtKB-SubCell"/>
</dbReference>
<dbReference type="GO" id="GO:0008270">
    <property type="term" value="F:zinc ion binding"/>
    <property type="evidence" value="ECO:0007669"/>
    <property type="project" value="UniProtKB-KW"/>
</dbReference>
<dbReference type="GO" id="GO:0006355">
    <property type="term" value="P:regulation of DNA-templated transcription"/>
    <property type="evidence" value="ECO:0007669"/>
    <property type="project" value="InterPro"/>
</dbReference>
<dbReference type="InterPro" id="IPR004330">
    <property type="entry name" value="FAR1_DNA_bnd_dom"/>
</dbReference>
<dbReference type="InterPro" id="IPR031052">
    <property type="entry name" value="FHY3/FAR1"/>
</dbReference>
<dbReference type="InterPro" id="IPR018289">
    <property type="entry name" value="MULE_transposase_dom"/>
</dbReference>
<dbReference type="InterPro" id="IPR006564">
    <property type="entry name" value="Znf_PMZ"/>
</dbReference>
<dbReference type="InterPro" id="IPR007527">
    <property type="entry name" value="Znf_SWIM"/>
</dbReference>
<dbReference type="PANTHER" id="PTHR31669">
    <property type="entry name" value="PROTEIN FAR1-RELATED SEQUENCE 10-RELATED"/>
    <property type="match status" value="1"/>
</dbReference>
<dbReference type="PANTHER" id="PTHR31669:SF280">
    <property type="entry name" value="PROTEIN FAR1-RELATED SEQUENCE 2"/>
    <property type="match status" value="1"/>
</dbReference>
<dbReference type="Pfam" id="PF03101">
    <property type="entry name" value="FAR1"/>
    <property type="match status" value="1"/>
</dbReference>
<dbReference type="Pfam" id="PF10551">
    <property type="entry name" value="MULE"/>
    <property type="match status" value="1"/>
</dbReference>
<dbReference type="Pfam" id="PF04434">
    <property type="entry name" value="SWIM"/>
    <property type="match status" value="1"/>
</dbReference>
<dbReference type="SMART" id="SM00575">
    <property type="entry name" value="ZnF_PMZ"/>
    <property type="match status" value="1"/>
</dbReference>
<dbReference type="PROSITE" id="PS50966">
    <property type="entry name" value="ZF_SWIM"/>
    <property type="match status" value="1"/>
</dbReference>
<reference key="1">
    <citation type="journal article" date="1999" name="Nature">
        <title>Sequence and analysis of chromosome 2 of the plant Arabidopsis thaliana.</title>
        <authorList>
            <person name="Lin X."/>
            <person name="Kaul S."/>
            <person name="Rounsley S.D."/>
            <person name="Shea T.P."/>
            <person name="Benito M.-I."/>
            <person name="Town C.D."/>
            <person name="Fujii C.Y."/>
            <person name="Mason T.M."/>
            <person name="Bowman C.L."/>
            <person name="Barnstead M.E."/>
            <person name="Feldblyum T.V."/>
            <person name="Buell C.R."/>
            <person name="Ketchum K.A."/>
            <person name="Lee J.J."/>
            <person name="Ronning C.M."/>
            <person name="Koo H.L."/>
            <person name="Moffat K.S."/>
            <person name="Cronin L.A."/>
            <person name="Shen M."/>
            <person name="Pai G."/>
            <person name="Van Aken S."/>
            <person name="Umayam L."/>
            <person name="Tallon L.J."/>
            <person name="Gill J.E."/>
            <person name="Adams M.D."/>
            <person name="Carrera A.J."/>
            <person name="Creasy T.H."/>
            <person name="Goodman H.M."/>
            <person name="Somerville C.R."/>
            <person name="Copenhaver G.P."/>
            <person name="Preuss D."/>
            <person name="Nierman W.C."/>
            <person name="White O."/>
            <person name="Eisen J.A."/>
            <person name="Salzberg S.L."/>
            <person name="Fraser C.M."/>
            <person name="Venter J.C."/>
        </authorList>
    </citation>
    <scope>NUCLEOTIDE SEQUENCE [LARGE SCALE GENOMIC DNA]</scope>
    <source>
        <strain>cv. Columbia</strain>
    </source>
</reference>
<reference key="2">
    <citation type="journal article" date="2017" name="Plant J.">
        <title>Araport11: a complete reannotation of the Arabidopsis thaliana reference genome.</title>
        <authorList>
            <person name="Cheng C.Y."/>
            <person name="Krishnakumar V."/>
            <person name="Chan A.P."/>
            <person name="Thibaud-Nissen F."/>
            <person name="Schobel S."/>
            <person name="Town C.D."/>
        </authorList>
    </citation>
    <scope>GENOME REANNOTATION</scope>
    <source>
        <strain>cv. Columbia</strain>
    </source>
</reference>
<reference key="3">
    <citation type="submission" date="2006-07" db="EMBL/GenBank/DDBJ databases">
        <title>Large-scale analysis of RIKEN Arabidopsis full-length (RAFL) cDNAs.</title>
        <authorList>
            <person name="Totoki Y."/>
            <person name="Seki M."/>
            <person name="Ishida J."/>
            <person name="Nakajima M."/>
            <person name="Enju A."/>
            <person name="Kamiya A."/>
            <person name="Narusaka M."/>
            <person name="Shin-i T."/>
            <person name="Nakagawa M."/>
            <person name="Sakamoto N."/>
            <person name="Oishi K."/>
            <person name="Kohara Y."/>
            <person name="Kobayashi M."/>
            <person name="Toyoda A."/>
            <person name="Sakaki Y."/>
            <person name="Sakurai T."/>
            <person name="Iida K."/>
            <person name="Akiyama K."/>
            <person name="Satou M."/>
            <person name="Toyoda T."/>
            <person name="Konagaya A."/>
            <person name="Carninci P."/>
            <person name="Kawai J."/>
            <person name="Hayashizaki Y."/>
            <person name="Shinozaki K."/>
        </authorList>
    </citation>
    <scope>NUCLEOTIDE SEQUENCE [LARGE SCALE MRNA] (ISOFORM 2)</scope>
    <source>
        <strain>cv. Columbia</strain>
    </source>
</reference>
<reference key="4">
    <citation type="journal article" date="2004" name="Plant Physiol.">
        <title>Arabidopsis FHY3/FAR1 gene family and distinct roles of its members in light control of Arabidopsis development.</title>
        <authorList>
            <person name="Lin R."/>
            <person name="Wang H."/>
        </authorList>
    </citation>
    <scope>TISSUE SPECIFICITY</scope>
    <scope>INDUCTION</scope>
    <scope>SUBCELLULAR LOCATION</scope>
    <scope>GENE FAMILY</scope>
    <scope>NOMENCLATURE</scope>
</reference>
<reference key="5">
    <citation type="journal article" date="2009" name="J. Proteomics">
        <title>Phosphoproteomic analysis of nuclei-enriched fractions from Arabidopsis thaliana.</title>
        <authorList>
            <person name="Jones A.M.E."/>
            <person name="MacLean D."/>
            <person name="Studholme D.J."/>
            <person name="Serna-Sanz A."/>
            <person name="Andreasson E."/>
            <person name="Rathjen J.P."/>
            <person name="Peck S.C."/>
        </authorList>
    </citation>
    <scope>IDENTIFICATION BY MASS SPECTROMETRY [LARGE SCALE ANALYSIS]</scope>
    <source>
        <strain>cv. Columbia</strain>
    </source>
</reference>
<comment type="function">
    <text>Putative transcription activator involved in regulating light control of development.</text>
</comment>
<comment type="subcellular location">
    <subcellularLocation>
        <location evidence="4">Nucleus</location>
    </subcellularLocation>
    <text>The nuclear localization is independent of the light treatment.</text>
</comment>
<comment type="alternative products">
    <event type="alternative splicing"/>
    <isoform>
        <id>Q3EBQ3-1</id>
        <name>1</name>
        <sequence type="displayed"/>
    </isoform>
    <isoform>
        <id>Q3EBQ3-2</id>
        <name>2</name>
        <sequence type="described" ref="VSP_036307"/>
    </isoform>
</comment>
<comment type="tissue specificity">
    <text evidence="4">Expressed in hypocotyls, rosette and cauline leaves, inflorescences stems, flowers and siliques.</text>
</comment>
<comment type="induction">
    <text evidence="4">Up-regulated in hypocotyls by far-red light treatment.</text>
</comment>
<comment type="similarity">
    <text evidence="6">Belongs to the FHY3/FAR1 family.</text>
</comment>
<comment type="sequence caution" evidence="6">
    <conflict type="erroneous gene model prediction">
        <sequence resource="EMBL-CDS" id="AAC69951"/>
    </conflict>
</comment>
<sequence length="807" mass="91968">MDDEDVEIDLLTKSSNVDVFCEASTSGNVAQCATVSELRNGMDFESKEAAYYFYREYARSVGFGITIKASRRSKRSGKFIDVKIACSRFGTKREKATAINPRSCPKTGCKAGLHMKRKEDEKWVIYNFVKEHNHEICPDDFYVSVRGKNKPAGALAIKKGLQLALEEEDLKLLLEHFMEMQDKQPGFFYAVDFDSDKRVRNVFWLDAKAKHDYCSFSDVVLFDTFYVRNGYRIPFAPFIGVSHHRQYVLLGCALIGEVSESTYSWLFRTWLKAVGGQAPGVMITDQDKLLSDIVVEVFPDVRHIFCLWSVLSKISEMLNPFVSQDDGFMESFGNCVASSWTDEHFERRWSNMIGKFELNENEWVQLLFRDRKKWVPHYFHGICLAGLSGPERSGSIASHFDKYMNSEATFKDFFELYMKFLQYRCDVEAKDDLEYQSKQPTLRSSLAFEKQLSLIYTDAAFKKFQAEVPGVVSCQLQKEREDGTTAIFRIEDFEERQNFFVALNNELLDACCSCHLFEYQGFLCKHAILVLQSADVSRVPSQYILKRWSKKGNNKEDKNDKCATIDNRMARFDDLCRRFVKLGVVASLSDEACKTALKLLEETVKHCVSMDNSSKFPSEPDKLMTGGSIGLENEGVLDCASKVSKKKKIQKKRKVYCGPEDATNRSEELRQETEQVSSRAPTFENCYIPQANMEEPELGSRATTLGVYYSTQQTNQGFPSISSIQNGYYGHPPTIQAMGNLHSIHERMSQYETQPSMQGAFQGQTGFRGSAIRGCYDIEETLHDMTMGSSQFQGSDSSHPSDHRLSN</sequence>
<accession>Q3EBQ3</accession>
<accession>Q0WQG7</accession>
<accession>Q56Y20</accession>
<accession>Q9ZV55</accession>
<gene>
    <name type="primary">FRS2</name>
    <name type="ordered locus">At2g32250</name>
    <name type="ORF">T32F6.23</name>
</gene>
<name>FRS2_ARATH</name>